<keyword id="KW-1185">Reference proteome</keyword>
<sequence>MANVTPDLVKALFVGFGKNFKDGLAKAPSQYTEIATVVKSTTASNTYAWLGQMPGLTEWIGDRTLTAIQSHGYSIVNKKWANGVEIQRTDIEDDNVGVYSPLIEELGRAAGEKADELVFGALTAGFKTACYDGQYFFDTDHPVGANVDGTNQKSVSNITDDSTGVTEANAWYLLDCSRSLKPIIYQERKAPTPAQITDANDEKVFMKDVFTYGVDSRSNVGYGFWQMAHAVKGKLTAENLWKAIEAMRAVRGDGDKRLAIRPTHIVVPPSLAQAATKLLERELRAEDGVAVDNEFKRMNLKLIVGDYL</sequence>
<dbReference type="EMBL" id="L42023">
    <property type="protein sequence ID" value="AAC23164.1"/>
    <property type="molecule type" value="Genomic_DNA"/>
</dbReference>
<dbReference type="PIR" id="C64033">
    <property type="entry name" value="C64033"/>
</dbReference>
<dbReference type="RefSeq" id="NP_439655.1">
    <property type="nucleotide sequence ID" value="NC_000907.1"/>
</dbReference>
<dbReference type="SMR" id="P44227"/>
<dbReference type="STRING" id="71421.HI_1505"/>
<dbReference type="DNASU" id="950373"/>
<dbReference type="EnsemblBacteria" id="AAC23164">
    <property type="protein sequence ID" value="AAC23164"/>
    <property type="gene ID" value="HI_1505"/>
</dbReference>
<dbReference type="KEGG" id="hin:HI_1505"/>
<dbReference type="PATRIC" id="fig|71421.8.peg.1575"/>
<dbReference type="eggNOG" id="COG4397">
    <property type="taxonomic scope" value="Bacteria"/>
</dbReference>
<dbReference type="HOGENOM" id="CLU_070805_0_0_6"/>
<dbReference type="OrthoDB" id="9804833at2"/>
<dbReference type="PhylomeDB" id="P44227"/>
<dbReference type="BioCyc" id="HINF71421:G1GJ1-1529-MONOMER"/>
<dbReference type="Proteomes" id="UP000000579">
    <property type="component" value="Chromosome"/>
</dbReference>
<dbReference type="InterPro" id="IPR018774">
    <property type="entry name" value="Phage_Mu_GpT"/>
</dbReference>
<dbReference type="Pfam" id="PF10124">
    <property type="entry name" value="Mu-like_gpT"/>
    <property type="match status" value="1"/>
</dbReference>
<gene>
    <name type="ordered locus">HI_1505</name>
</gene>
<comment type="similarity">
    <text evidence="1">To phage Mu protein T.</text>
</comment>
<evidence type="ECO:0000305" key="1"/>
<reference key="1">
    <citation type="journal article" date="1995" name="Science">
        <title>Whole-genome random sequencing and assembly of Haemophilus influenzae Rd.</title>
        <authorList>
            <person name="Fleischmann R.D."/>
            <person name="Adams M.D."/>
            <person name="White O."/>
            <person name="Clayton R.A."/>
            <person name="Kirkness E.F."/>
            <person name="Kerlavage A.R."/>
            <person name="Bult C.J."/>
            <person name="Tomb J.-F."/>
            <person name="Dougherty B.A."/>
            <person name="Merrick J.M."/>
            <person name="McKenney K."/>
            <person name="Sutton G.G."/>
            <person name="FitzHugh W."/>
            <person name="Fields C.A."/>
            <person name="Gocayne J.D."/>
            <person name="Scott J.D."/>
            <person name="Shirley R."/>
            <person name="Liu L.-I."/>
            <person name="Glodek A."/>
            <person name="Kelley J.M."/>
            <person name="Weidman J.F."/>
            <person name="Phillips C.A."/>
            <person name="Spriggs T."/>
            <person name="Hedblom E."/>
            <person name="Cotton M.D."/>
            <person name="Utterback T.R."/>
            <person name="Hanna M.C."/>
            <person name="Nguyen D.T."/>
            <person name="Saudek D.M."/>
            <person name="Brandon R.C."/>
            <person name="Fine L.D."/>
            <person name="Fritchman J.L."/>
            <person name="Fuhrmann J.L."/>
            <person name="Geoghagen N.S.M."/>
            <person name="Gnehm C.L."/>
            <person name="McDonald L.A."/>
            <person name="Small K.V."/>
            <person name="Fraser C.M."/>
            <person name="Smith H.O."/>
            <person name="Venter J.C."/>
        </authorList>
    </citation>
    <scope>NUCLEOTIDE SEQUENCE [LARGE SCALE GENOMIC DNA]</scope>
    <source>
        <strain>ATCC 51907 / DSM 11121 / KW20 / Rd</strain>
    </source>
</reference>
<accession>P44227</accession>
<name>VPT_HAEIN</name>
<protein>
    <recommendedName>
        <fullName>Mu-like prophage FluMu major head subunit</fullName>
    </recommendedName>
</protein>
<proteinExistence type="predicted"/>
<feature type="chain" id="PRO_0000077696" description="Mu-like prophage FluMu major head subunit">
    <location>
        <begin position="1"/>
        <end position="308"/>
    </location>
</feature>
<organism>
    <name type="scientific">Haemophilus influenzae (strain ATCC 51907 / DSM 11121 / KW20 / Rd)</name>
    <dbReference type="NCBI Taxonomy" id="71421"/>
    <lineage>
        <taxon>Bacteria</taxon>
        <taxon>Pseudomonadati</taxon>
        <taxon>Pseudomonadota</taxon>
        <taxon>Gammaproteobacteria</taxon>
        <taxon>Pasteurellales</taxon>
        <taxon>Pasteurellaceae</taxon>
        <taxon>Haemophilus</taxon>
    </lineage>
</organism>